<sequence length="275" mass="31438">MPSNICKFFLTWWLIQQVTGLTGPLMLDTAPNAFDDQYEGCVNKMEEKAPLLLQEDFNMNAKLKVAWEEAKKRWNNIKPSRSYPKGFNDFHGTALVAYTGSIAVDFNRAVREFKENPGQFHYKAFHYYLTRALQLLSNGDCHSVYRGTKTRFHYTGAGSVRFGQFTSSSLSKKVAQSQEFFSDHGTLFIIKTCLGVYIKEFSFRPDQEEVLIPGYEVYQKVRTQGYNEIFLDSPKRKKSNYNCLYSSAGARESCVSLFLVVLPSLLVQLLCLAEP</sequence>
<dbReference type="EC" id="2.4.2.31" evidence="2"/>
<dbReference type="EC" id="3.2.2.5" evidence="2"/>
<dbReference type="EMBL" id="M85193">
    <property type="protein sequence ID" value="AAA42085.1"/>
    <property type="molecule type" value="mRNA"/>
</dbReference>
<dbReference type="EMBL" id="AJ297708">
    <property type="protein sequence ID" value="CAC20897.1"/>
    <property type="molecule type" value="Genomic_DNA"/>
</dbReference>
<dbReference type="EMBL" id="BC099070">
    <property type="protein sequence ID" value="AAH99070.1"/>
    <property type="molecule type" value="mRNA"/>
</dbReference>
<dbReference type="EMBL" id="X99123">
    <property type="protein sequence ID" value="CAA67566.1"/>
    <property type="molecule type" value="mRNA"/>
</dbReference>
<dbReference type="EMBL" id="X99122">
    <property type="protein sequence ID" value="CAA67565.1"/>
    <property type="molecule type" value="mRNA"/>
</dbReference>
<dbReference type="PIR" id="A34866">
    <property type="entry name" value="A34866"/>
</dbReference>
<dbReference type="RefSeq" id="NP_942030.1">
    <property type="nucleotide sequence ID" value="NM_198735.3"/>
</dbReference>
<dbReference type="RefSeq" id="XP_017444448.1">
    <property type="nucleotide sequence ID" value="XM_017588959.3"/>
</dbReference>
<dbReference type="RefSeq" id="XP_038962041.1">
    <property type="nucleotide sequence ID" value="XM_039106113.2"/>
</dbReference>
<dbReference type="RefSeq" id="XP_063141264.1">
    <property type="nucleotide sequence ID" value="XM_063285194.1"/>
</dbReference>
<dbReference type="RefSeq" id="XP_063141266.1">
    <property type="nucleotide sequence ID" value="XM_063285196.1"/>
</dbReference>
<dbReference type="PDB" id="1GXY">
    <property type="method" value="X-ray"/>
    <property type="resolution" value="1.71 A"/>
    <property type="chains" value="A/B=21-246"/>
</dbReference>
<dbReference type="PDB" id="1GXZ">
    <property type="method" value="X-ray"/>
    <property type="resolution" value="2.10 A"/>
    <property type="chains" value="A/B=21-246"/>
</dbReference>
<dbReference type="PDB" id="1GY0">
    <property type="method" value="X-ray"/>
    <property type="resolution" value="2.08 A"/>
    <property type="chains" value="A=21-246"/>
</dbReference>
<dbReference type="PDB" id="1OG1">
    <property type="method" value="X-ray"/>
    <property type="resolution" value="2.00 A"/>
    <property type="chains" value="A=21-246"/>
</dbReference>
<dbReference type="PDB" id="1OG3">
    <property type="method" value="X-ray"/>
    <property type="resolution" value="2.60 A"/>
    <property type="chains" value="A=21-246"/>
</dbReference>
<dbReference type="PDB" id="1OG4">
    <property type="method" value="X-ray"/>
    <property type="resolution" value="2.60 A"/>
    <property type="chains" value="A=21-246"/>
</dbReference>
<dbReference type="PDBsum" id="1GXY"/>
<dbReference type="PDBsum" id="1GXZ"/>
<dbReference type="PDBsum" id="1GY0"/>
<dbReference type="PDBsum" id="1OG1"/>
<dbReference type="PDBsum" id="1OG3"/>
<dbReference type="PDBsum" id="1OG4"/>
<dbReference type="SMR" id="P20974"/>
<dbReference type="STRING" id="10116.ENSRNOP00000069125"/>
<dbReference type="PhosphoSitePlus" id="P20974"/>
<dbReference type="PaxDb" id="10116-ENSRNOP00000026644"/>
<dbReference type="Ensembl" id="ENSRNOT00000026644.9">
    <property type="protein sequence ID" value="ENSRNOP00000026644.4"/>
    <property type="gene ID" value="ENSRNOG00000019687.9"/>
</dbReference>
<dbReference type="GeneID" id="293152"/>
<dbReference type="KEGG" id="rno:293152"/>
<dbReference type="UCSC" id="RGD:3521">
    <property type="organism name" value="rat"/>
</dbReference>
<dbReference type="AGR" id="RGD:3521"/>
<dbReference type="CTD" id="11872"/>
<dbReference type="RGD" id="3521">
    <property type="gene designation" value="Art2b"/>
</dbReference>
<dbReference type="eggNOG" id="ENOG502QUE9">
    <property type="taxonomic scope" value="Eukaryota"/>
</dbReference>
<dbReference type="GeneTree" id="ENSGT01030000234601"/>
<dbReference type="HOGENOM" id="CLU_059744_0_0_1"/>
<dbReference type="OMA" id="NFQFKAF"/>
<dbReference type="OrthoDB" id="78295at9989"/>
<dbReference type="PhylomeDB" id="P20974"/>
<dbReference type="TreeFam" id="TF335356"/>
<dbReference type="EvolutionaryTrace" id="P20974"/>
<dbReference type="Proteomes" id="UP000002494">
    <property type="component" value="Chromosome 1"/>
</dbReference>
<dbReference type="Bgee" id="ENSRNOG00000019687">
    <property type="expression patterns" value="Expressed in spleen and 12 other cell types or tissues"/>
</dbReference>
<dbReference type="ExpressionAtlas" id="P20974">
    <property type="expression patterns" value="baseline and differential"/>
</dbReference>
<dbReference type="GO" id="GO:0005886">
    <property type="term" value="C:plasma membrane"/>
    <property type="evidence" value="ECO:0007669"/>
    <property type="project" value="UniProtKB-SubCell"/>
</dbReference>
<dbReference type="GO" id="GO:0098552">
    <property type="term" value="C:side of membrane"/>
    <property type="evidence" value="ECO:0007669"/>
    <property type="project" value="UniProtKB-KW"/>
</dbReference>
<dbReference type="GO" id="GO:0016798">
    <property type="term" value="F:hydrolase activity, acting on glycosyl bonds"/>
    <property type="evidence" value="ECO:0000250"/>
    <property type="project" value="UniProtKB"/>
</dbReference>
<dbReference type="GO" id="GO:0003953">
    <property type="term" value="F:NAD+ nucleosidase activity"/>
    <property type="evidence" value="ECO:0007669"/>
    <property type="project" value="UniProtKB-EC"/>
</dbReference>
<dbReference type="GO" id="GO:0003950">
    <property type="term" value="F:NAD+ poly-ADP-ribosyltransferase activity"/>
    <property type="evidence" value="ECO:0000318"/>
    <property type="project" value="GO_Central"/>
</dbReference>
<dbReference type="GO" id="GO:0106274">
    <property type="term" value="F:NAD+-protein-arginine ADP-ribosyltransferase activity"/>
    <property type="evidence" value="ECO:0007669"/>
    <property type="project" value="UniProtKB-EC"/>
</dbReference>
<dbReference type="GO" id="GO:0016779">
    <property type="term" value="F:nucleotidyltransferase activity"/>
    <property type="evidence" value="ECO:0007669"/>
    <property type="project" value="UniProtKB-KW"/>
</dbReference>
<dbReference type="GO" id="GO:0019677">
    <property type="term" value="P:NAD catabolic process"/>
    <property type="evidence" value="ECO:0000250"/>
    <property type="project" value="UniProtKB"/>
</dbReference>
<dbReference type="FunFam" id="3.90.176.10:FF:000001">
    <property type="entry name" value="NAD(P)(+)--arginine ADP-ribosyltransferase"/>
    <property type="match status" value="1"/>
</dbReference>
<dbReference type="Gene3D" id="3.90.176.10">
    <property type="entry name" value="Toxin ADP-ribosyltransferase, Chain A, domain 1"/>
    <property type="match status" value="1"/>
</dbReference>
<dbReference type="InterPro" id="IPR050999">
    <property type="entry name" value="ADP-ribosyltransferase_ARG"/>
</dbReference>
<dbReference type="InterPro" id="IPR000768">
    <property type="entry name" value="ART"/>
</dbReference>
<dbReference type="PANTHER" id="PTHR10339">
    <property type="entry name" value="ADP-RIBOSYLTRANSFERASE"/>
    <property type="match status" value="1"/>
</dbReference>
<dbReference type="PANTHER" id="PTHR10339:SF24">
    <property type="entry name" value="T-CELL ECTO-ADP-RIBOSYLTRANSFERASE 1-RELATED"/>
    <property type="match status" value="1"/>
</dbReference>
<dbReference type="Pfam" id="PF01129">
    <property type="entry name" value="ART"/>
    <property type="match status" value="1"/>
</dbReference>
<dbReference type="PRINTS" id="PR00970">
    <property type="entry name" value="RIBTRNSFRASE"/>
</dbReference>
<dbReference type="SUPFAM" id="SSF56399">
    <property type="entry name" value="ADP-ribosylation"/>
    <property type="match status" value="1"/>
</dbReference>
<dbReference type="PROSITE" id="PS01291">
    <property type="entry name" value="ART"/>
    <property type="match status" value="1"/>
</dbReference>
<dbReference type="PROSITE" id="PS51996">
    <property type="entry name" value="TR_MART"/>
    <property type="match status" value="1"/>
</dbReference>
<protein>
    <recommendedName>
        <fullName>T-cell ecto-ADP-ribosyltransferase 2</fullName>
        <ecNumber evidence="2">2.4.2.31</ecNumber>
    </recommendedName>
    <alternativeName>
        <fullName>ADP-ribosyltransferase C2 and C3 toxin-like 2</fullName>
        <shortName>ARTC2</shortName>
    </alternativeName>
    <alternativeName>
        <fullName>Alloantigen Rt6.2</fullName>
    </alternativeName>
    <alternativeName>
        <fullName>Mono(ADP-ribosyl)transferase 2B</fullName>
    </alternativeName>
    <alternativeName>
        <fullName>NAD(+) glycohydrolase</fullName>
        <ecNumber evidence="2">3.2.2.5</ecNumber>
    </alternativeName>
    <alternativeName>
        <fullName>T-cell NAD(P)(+)--arginine ADP-ribosyltransferase 2</fullName>
    </alternativeName>
    <alternativeName>
        <fullName>T-cell mono(ADP-ribosyl)transferase 2</fullName>
    </alternativeName>
    <alternativeName>
        <fullName>T-cell surface protein Rt6.2</fullName>
    </alternativeName>
</protein>
<reference key="1">
    <citation type="journal article" date="1990" name="Proc. Natl. Acad. Sci. U.S.A.">
        <title>Primary structure of rat RT6.2, a nonglycosylated phosphatidylinositol-linked surface marker of postthymic T cells.</title>
        <authorList>
            <person name="Koch F."/>
            <person name="Haag F."/>
            <person name="Kashan A."/>
            <person name="Thiele H.-G."/>
        </authorList>
    </citation>
    <scope>NUCLEOTIDE SEQUENCE [MRNA]</scope>
</reference>
<reference key="2">
    <citation type="journal article" date="2001" name="Immunogenetics">
        <title>DNA methylation contributes to tissue- and allele-specific expression of the T-cell differentiation marker RT6.</title>
        <authorList>
            <person name="Rothenburg S."/>
            <person name="Koch-Nolte F."/>
            <person name="Thiele H.-G."/>
            <person name="Haag F."/>
        </authorList>
    </citation>
    <scope>NUCLEOTIDE SEQUENCE [GENOMIC DNA]</scope>
    <source>
        <strain>BH</strain>
    </source>
</reference>
<reference key="3">
    <citation type="journal article" date="2004" name="Genome Res.">
        <title>The status, quality, and expansion of the NIH full-length cDNA project: the Mammalian Gene Collection (MGC).</title>
        <authorList>
            <consortium name="The MGC Project Team"/>
        </authorList>
    </citation>
    <scope>NUCLEOTIDE SEQUENCE [LARGE SCALE MRNA]</scope>
    <source>
        <tissue>Spleen</tissue>
    </source>
</reference>
<reference key="4">
    <citation type="journal article" date="1996" name="J. Immunol.">
        <title>Structure of the gene encoding the rat T cell ecto-ADP-ribosyltransferase RT6.</title>
        <authorList>
            <person name="Haag F."/>
            <person name="Kuhlenbaumer G."/>
            <person name="Koch-Nolte F."/>
            <person name="Wingender E."/>
            <person name="Thiele H.-G."/>
        </authorList>
    </citation>
    <scope>NUCLEOTIDE SEQUENCE [MRNA] OF 1-201</scope>
    <source>
        <strain>DA</strain>
        <tissue>Spleen</tissue>
    </source>
</reference>
<reference key="5">
    <citation type="journal article" date="1989" name="Immunol. Lett.">
        <title>A single-step purification procedure and partial amino acid sequence analysis of picomole amounts of the rat T cell alloantigen RT6.2.</title>
        <authorList>
            <person name="Kashan A."/>
            <person name="Buck F."/>
            <person name="Haag F."/>
            <person name="Koch F."/>
            <person name="Thiele H.-G."/>
        </authorList>
    </citation>
    <scope>PARTIAL PROTEIN SEQUENCE</scope>
</reference>
<reference key="6">
    <citation type="journal article" date="1994" name="J. Biol. Chem.">
        <title>Expression of NAD glycohydrolase activity by rat mammary adenocarcinoma cells transformed with rat T cell alloantigen RT6.2.</title>
        <authorList>
            <person name="Takada T."/>
            <person name="Iida K."/>
            <person name="Moss J."/>
        </authorList>
    </citation>
    <scope>CHARACTERIZATION</scope>
</reference>
<reference key="7">
    <citation type="journal article" date="2002" name="J. Mol. Biol.">
        <title>Structure of the ecto-ADP-ribosyl transferase ART2.2 from rat.</title>
        <authorList>
            <person name="Mueller-Dieckmann C."/>
            <person name="Ritter H."/>
            <person name="Haag F."/>
            <person name="Koch-Nolte F."/>
            <person name="Schulz G.E."/>
        </authorList>
    </citation>
    <scope>X-RAY CRYSTALLOGRAPHY (1.71 ANGSTROMS) OF 21-246</scope>
    <scope>DISULFIDE BONDS</scope>
</reference>
<reference key="8">
    <citation type="journal article" date="2003" name="Biochemistry">
        <title>Substrate binding and catalysis of ecto-ADP-ribosyltransferase 2.2 from rat.</title>
        <authorList>
            <person name="Ritter H."/>
            <person name="Koch-Nolte F."/>
            <person name="Marquez V.E."/>
            <person name="Schulz G.E."/>
        </authorList>
    </citation>
    <scope>X-RAY CRYSTALLOGRAPHY (2.0 ANGSTROMS) OF 21-246 OF WILD-TYPE AND MUTANTS ILE-189 AND ALA-189 IN COMPLEX WITH NAD(+)</scope>
    <scope>ADP-RIBOSYLATION AT ARG-204</scope>
    <scope>DISULFIDE BONDS</scope>
</reference>
<evidence type="ECO:0000250" key="1"/>
<evidence type="ECO:0000250" key="2">
    <source>
        <dbReference type="UniProtKB" id="O35975"/>
    </source>
</evidence>
<evidence type="ECO:0000255" key="3">
    <source>
        <dbReference type="PROSITE-ProRule" id="PRU01340"/>
    </source>
</evidence>
<evidence type="ECO:0000305" key="4"/>
<evidence type="ECO:0000305" key="5">
    <source>
    </source>
</evidence>
<evidence type="ECO:0007829" key="6">
    <source>
        <dbReference type="PDB" id="1GXY"/>
    </source>
</evidence>
<evidence type="ECO:0007829" key="7">
    <source>
        <dbReference type="PDB" id="1OG1"/>
    </source>
</evidence>
<comment type="function">
    <text>Has both NAD(+) glycohydrolase and ADP-ribosyltransferase activity (to a lesser extent).</text>
</comment>
<comment type="catalytic activity">
    <reaction evidence="2">
        <text>L-arginyl-[protein] + NAD(+) = N(omega)-(ADP-D-ribosyl)-L-arginyl-[protein] + nicotinamide + H(+)</text>
        <dbReference type="Rhea" id="RHEA:19149"/>
        <dbReference type="Rhea" id="RHEA-COMP:10532"/>
        <dbReference type="Rhea" id="RHEA-COMP:15087"/>
        <dbReference type="ChEBI" id="CHEBI:15378"/>
        <dbReference type="ChEBI" id="CHEBI:17154"/>
        <dbReference type="ChEBI" id="CHEBI:29965"/>
        <dbReference type="ChEBI" id="CHEBI:57540"/>
        <dbReference type="ChEBI" id="CHEBI:142554"/>
        <dbReference type="EC" id="2.4.2.31"/>
    </reaction>
</comment>
<comment type="catalytic activity">
    <reaction evidence="2">
        <text>NAD(+) + H2O = ADP-D-ribose + nicotinamide + H(+)</text>
        <dbReference type="Rhea" id="RHEA:16301"/>
        <dbReference type="ChEBI" id="CHEBI:15377"/>
        <dbReference type="ChEBI" id="CHEBI:15378"/>
        <dbReference type="ChEBI" id="CHEBI:17154"/>
        <dbReference type="ChEBI" id="CHEBI:57540"/>
        <dbReference type="ChEBI" id="CHEBI:57967"/>
        <dbReference type="EC" id="3.2.2.5"/>
    </reaction>
</comment>
<comment type="subcellular location">
    <subcellularLocation>
        <location>Cell membrane</location>
        <topology>Lipid-anchor</topology>
        <topology>GPI-anchor</topology>
    </subcellularLocation>
</comment>
<comment type="tissue specificity">
    <text>Postthymic T-cells.</text>
</comment>
<comment type="similarity">
    <text evidence="4">Belongs to the Arg-specific ADP-ribosyltransferase family.</text>
</comment>
<proteinExistence type="evidence at protein level"/>
<feature type="signal peptide">
    <location>
        <begin position="1"/>
        <end position="20"/>
    </location>
</feature>
<feature type="chain" id="PRO_0000019323" description="T-cell ecto-ADP-ribosyltransferase 2">
    <location>
        <begin position="21"/>
        <end position="246"/>
    </location>
</feature>
<feature type="propeptide" id="PRO_0000019324" description="Removed in mature form" evidence="1">
    <location>
        <begin position="247"/>
        <end position="275"/>
    </location>
</feature>
<feature type="domain" description="TR mART core" evidence="3">
    <location>
        <begin position="61"/>
        <end position="238"/>
    </location>
</feature>
<feature type="active site" evidence="3">
    <location>
        <position position="146"/>
    </location>
</feature>
<feature type="active site" evidence="3">
    <location>
        <position position="167"/>
    </location>
</feature>
<feature type="active site" evidence="3">
    <location>
        <position position="209"/>
    </location>
</feature>
<feature type="binding site">
    <location>
        <position position="98"/>
    </location>
    <ligand>
        <name>NAD(+)</name>
        <dbReference type="ChEBI" id="CHEBI:57540"/>
    </ligand>
</feature>
<feature type="binding site">
    <location>
        <position position="146"/>
    </location>
    <ligand>
        <name>NAD(+)</name>
        <dbReference type="ChEBI" id="CHEBI:57540"/>
    </ligand>
</feature>
<feature type="binding site">
    <location>
        <position position="164"/>
    </location>
    <ligand>
        <name>NAD(+)</name>
        <dbReference type="ChEBI" id="CHEBI:57540"/>
    </ligand>
</feature>
<feature type="binding site">
    <location>
        <position position="202"/>
    </location>
    <ligand>
        <name>NAD(+)</name>
        <dbReference type="ChEBI" id="CHEBI:57540"/>
    </ligand>
</feature>
<feature type="modified residue" description="ADP-ribosylarginine; by autocatalysis" evidence="5">
    <location>
        <position position="204"/>
    </location>
</feature>
<feature type="lipid moiety-binding region" description="GPI-anchor amidated serine" evidence="1">
    <location>
        <position position="246"/>
    </location>
</feature>
<feature type="disulfide bond">
    <location>
        <begin position="41"/>
        <end position="243"/>
    </location>
</feature>
<feature type="disulfide bond">
    <location>
        <begin position="141"/>
        <end position="193"/>
    </location>
</feature>
<feature type="sequence conflict" description="In Ref. 2; CAC20897." evidence="4" ref="2">
    <original>T</original>
    <variation>K</variation>
    <location>
        <position position="29"/>
    </location>
</feature>
<feature type="strand" evidence="7">
    <location>
        <begin position="25"/>
        <end position="28"/>
    </location>
</feature>
<feature type="helix" evidence="6">
    <location>
        <begin position="42"/>
        <end position="59"/>
    </location>
</feature>
<feature type="helix" evidence="6">
    <location>
        <begin position="61"/>
        <end position="77"/>
    </location>
</feature>
<feature type="helix" evidence="7">
    <location>
        <begin position="78"/>
        <end position="80"/>
    </location>
</feature>
<feature type="helix" evidence="6">
    <location>
        <begin position="89"/>
        <end position="98"/>
    </location>
</feature>
<feature type="turn" evidence="7">
    <location>
        <begin position="99"/>
        <end position="102"/>
    </location>
</feature>
<feature type="helix" evidence="6">
    <location>
        <begin position="103"/>
        <end position="111"/>
    </location>
</feature>
<feature type="turn" evidence="6">
    <location>
        <begin position="112"/>
        <end position="115"/>
    </location>
</feature>
<feature type="helix" evidence="6">
    <location>
        <begin position="117"/>
        <end position="119"/>
    </location>
</feature>
<feature type="helix" evidence="6">
    <location>
        <begin position="123"/>
        <end position="135"/>
    </location>
</feature>
<feature type="strand" evidence="6">
    <location>
        <begin position="142"/>
        <end position="150"/>
    </location>
</feature>
<feature type="strand" evidence="7">
    <location>
        <begin position="152"/>
        <end position="154"/>
    </location>
</feature>
<feature type="strand" evidence="6">
    <location>
        <begin position="156"/>
        <end position="158"/>
    </location>
</feature>
<feature type="strand" evidence="7">
    <location>
        <begin position="166"/>
        <end position="170"/>
    </location>
</feature>
<feature type="helix" evidence="6">
    <location>
        <begin position="172"/>
        <end position="175"/>
    </location>
</feature>
<feature type="turn" evidence="6">
    <location>
        <begin position="178"/>
        <end position="180"/>
    </location>
</feature>
<feature type="strand" evidence="6">
    <location>
        <begin position="185"/>
        <end position="194"/>
    </location>
</feature>
<feature type="helix" evidence="6">
    <location>
        <begin position="199"/>
        <end position="201"/>
    </location>
</feature>
<feature type="helix" evidence="6">
    <location>
        <begin position="205"/>
        <end position="207"/>
    </location>
</feature>
<feature type="strand" evidence="6">
    <location>
        <begin position="209"/>
        <end position="212"/>
    </location>
</feature>
<feature type="strand" evidence="6">
    <location>
        <begin position="216"/>
        <end position="224"/>
    </location>
</feature>
<feature type="turn" evidence="6">
    <location>
        <begin position="225"/>
        <end position="227"/>
    </location>
</feature>
<feature type="strand" evidence="6">
    <location>
        <begin position="228"/>
        <end position="236"/>
    </location>
</feature>
<accession>P20974</accession>
<accession>P97912</accession>
<accession>Q4FZV8</accession>
<accession>Q95576</accession>
<accession>Q9EPH9</accession>
<keyword id="KW-0002">3D-structure</keyword>
<keyword id="KW-0013">ADP-ribosylation</keyword>
<keyword id="KW-1003">Cell membrane</keyword>
<keyword id="KW-0903">Direct protein sequencing</keyword>
<keyword id="KW-1015">Disulfide bond</keyword>
<keyword id="KW-0325">Glycoprotein</keyword>
<keyword id="KW-0328">Glycosyltransferase</keyword>
<keyword id="KW-0336">GPI-anchor</keyword>
<keyword id="KW-0378">Hydrolase</keyword>
<keyword id="KW-0449">Lipoprotein</keyword>
<keyword id="KW-0472">Membrane</keyword>
<keyword id="KW-0520">NAD</keyword>
<keyword id="KW-0521">NADP</keyword>
<keyword id="KW-0548">Nucleotidyltransferase</keyword>
<keyword id="KW-1185">Reference proteome</keyword>
<keyword id="KW-0732">Signal</keyword>
<keyword id="KW-0808">Transferase</keyword>
<gene>
    <name type="primary">Art2b</name>
    <name type="synonym">Rt6-b</name>
</gene>
<organism>
    <name type="scientific">Rattus norvegicus</name>
    <name type="common">Rat</name>
    <dbReference type="NCBI Taxonomy" id="10116"/>
    <lineage>
        <taxon>Eukaryota</taxon>
        <taxon>Metazoa</taxon>
        <taxon>Chordata</taxon>
        <taxon>Craniata</taxon>
        <taxon>Vertebrata</taxon>
        <taxon>Euteleostomi</taxon>
        <taxon>Mammalia</taxon>
        <taxon>Eutheria</taxon>
        <taxon>Euarchontoglires</taxon>
        <taxon>Glires</taxon>
        <taxon>Rodentia</taxon>
        <taxon>Myomorpha</taxon>
        <taxon>Muroidea</taxon>
        <taxon>Muridae</taxon>
        <taxon>Murinae</taxon>
        <taxon>Rattus</taxon>
    </lineage>
</organism>
<name>NAR2B_RAT</name>